<feature type="chain" id="PRO_1000137682" description="Chaperone protein DnaJ">
    <location>
        <begin position="1"/>
        <end position="376"/>
    </location>
</feature>
<feature type="domain" description="J" evidence="1">
    <location>
        <begin position="5"/>
        <end position="70"/>
    </location>
</feature>
<feature type="repeat" description="CXXCXGXG motif">
    <location>
        <begin position="144"/>
        <end position="151"/>
    </location>
</feature>
<feature type="repeat" description="CXXCXGXG motif">
    <location>
        <begin position="161"/>
        <end position="168"/>
    </location>
</feature>
<feature type="repeat" description="CXXCXGXG motif">
    <location>
        <begin position="183"/>
        <end position="190"/>
    </location>
</feature>
<feature type="repeat" description="CXXCXGXG motif">
    <location>
        <begin position="197"/>
        <end position="204"/>
    </location>
</feature>
<feature type="zinc finger region" description="CR-type" evidence="1">
    <location>
        <begin position="131"/>
        <end position="209"/>
    </location>
</feature>
<feature type="binding site" evidence="1">
    <location>
        <position position="144"/>
    </location>
    <ligand>
        <name>Zn(2+)</name>
        <dbReference type="ChEBI" id="CHEBI:29105"/>
        <label>1</label>
    </ligand>
</feature>
<feature type="binding site" evidence="1">
    <location>
        <position position="147"/>
    </location>
    <ligand>
        <name>Zn(2+)</name>
        <dbReference type="ChEBI" id="CHEBI:29105"/>
        <label>1</label>
    </ligand>
</feature>
<feature type="binding site" evidence="1">
    <location>
        <position position="161"/>
    </location>
    <ligand>
        <name>Zn(2+)</name>
        <dbReference type="ChEBI" id="CHEBI:29105"/>
        <label>2</label>
    </ligand>
</feature>
<feature type="binding site" evidence="1">
    <location>
        <position position="164"/>
    </location>
    <ligand>
        <name>Zn(2+)</name>
        <dbReference type="ChEBI" id="CHEBI:29105"/>
        <label>2</label>
    </ligand>
</feature>
<feature type="binding site" evidence="1">
    <location>
        <position position="183"/>
    </location>
    <ligand>
        <name>Zn(2+)</name>
        <dbReference type="ChEBI" id="CHEBI:29105"/>
        <label>2</label>
    </ligand>
</feature>
<feature type="binding site" evidence="1">
    <location>
        <position position="186"/>
    </location>
    <ligand>
        <name>Zn(2+)</name>
        <dbReference type="ChEBI" id="CHEBI:29105"/>
        <label>2</label>
    </ligand>
</feature>
<feature type="binding site" evidence="1">
    <location>
        <position position="197"/>
    </location>
    <ligand>
        <name>Zn(2+)</name>
        <dbReference type="ChEBI" id="CHEBI:29105"/>
        <label>1</label>
    </ligand>
</feature>
<feature type="binding site" evidence="1">
    <location>
        <position position="200"/>
    </location>
    <ligand>
        <name>Zn(2+)</name>
        <dbReference type="ChEBI" id="CHEBI:29105"/>
        <label>1</label>
    </ligand>
</feature>
<organism>
    <name type="scientific">Escherichia coli O45:K1 (strain S88 / ExPEC)</name>
    <dbReference type="NCBI Taxonomy" id="585035"/>
    <lineage>
        <taxon>Bacteria</taxon>
        <taxon>Pseudomonadati</taxon>
        <taxon>Pseudomonadota</taxon>
        <taxon>Gammaproteobacteria</taxon>
        <taxon>Enterobacterales</taxon>
        <taxon>Enterobacteriaceae</taxon>
        <taxon>Escherichia</taxon>
    </lineage>
</organism>
<protein>
    <recommendedName>
        <fullName evidence="1">Chaperone protein DnaJ</fullName>
    </recommendedName>
</protein>
<gene>
    <name evidence="1" type="primary">dnaJ</name>
    <name type="ordered locus">ECS88_0015</name>
</gene>
<evidence type="ECO:0000255" key="1">
    <source>
        <dbReference type="HAMAP-Rule" id="MF_01152"/>
    </source>
</evidence>
<name>DNAJ_ECO45</name>
<accession>B7MAD6</accession>
<keyword id="KW-0143">Chaperone</keyword>
<keyword id="KW-0963">Cytoplasm</keyword>
<keyword id="KW-0235">DNA replication</keyword>
<keyword id="KW-0479">Metal-binding</keyword>
<keyword id="KW-1185">Reference proteome</keyword>
<keyword id="KW-0677">Repeat</keyword>
<keyword id="KW-0346">Stress response</keyword>
<keyword id="KW-0862">Zinc</keyword>
<keyword id="KW-0863">Zinc-finger</keyword>
<comment type="function">
    <text evidence="1">Participates actively in the response to hyperosmotic and heat shock by preventing the aggregation of stress-denatured proteins and by disaggregating proteins, also in an autonomous, DnaK-independent fashion. Unfolded proteins bind initially to DnaJ; upon interaction with the DnaJ-bound protein, DnaK hydrolyzes its bound ATP, resulting in the formation of a stable complex. GrpE releases ADP from DnaK; ATP binding to DnaK triggers the release of the substrate protein, thus completing the reaction cycle. Several rounds of ATP-dependent interactions between DnaJ, DnaK and GrpE are required for fully efficient folding. Also involved, together with DnaK and GrpE, in the DNA replication of plasmids through activation of initiation proteins.</text>
</comment>
<comment type="cofactor">
    <cofactor evidence="1">
        <name>Zn(2+)</name>
        <dbReference type="ChEBI" id="CHEBI:29105"/>
    </cofactor>
    <text evidence="1">Binds 2 Zn(2+) ions per monomer.</text>
</comment>
<comment type="subunit">
    <text evidence="1">Homodimer.</text>
</comment>
<comment type="subcellular location">
    <subcellularLocation>
        <location evidence="1">Cytoplasm</location>
    </subcellularLocation>
</comment>
<comment type="domain">
    <text evidence="1">The J domain is necessary and sufficient to stimulate DnaK ATPase activity. Zinc center 1 plays an important role in the autonomous, DnaK-independent chaperone activity of DnaJ. Zinc center 2 is essential for interaction with DnaK and for DnaJ activity.</text>
</comment>
<comment type="similarity">
    <text evidence="1">Belongs to the DnaJ family.</text>
</comment>
<dbReference type="EMBL" id="CU928161">
    <property type="protein sequence ID" value="CAR01382.1"/>
    <property type="molecule type" value="Genomic_DNA"/>
</dbReference>
<dbReference type="RefSeq" id="WP_001118464.1">
    <property type="nucleotide sequence ID" value="NC_011742.1"/>
</dbReference>
<dbReference type="SMR" id="B7MAD6"/>
<dbReference type="GeneID" id="93777428"/>
<dbReference type="KEGG" id="ecz:ECS88_0015"/>
<dbReference type="HOGENOM" id="CLU_017633_0_7_6"/>
<dbReference type="Proteomes" id="UP000000747">
    <property type="component" value="Chromosome"/>
</dbReference>
<dbReference type="GO" id="GO:0005737">
    <property type="term" value="C:cytoplasm"/>
    <property type="evidence" value="ECO:0007669"/>
    <property type="project" value="UniProtKB-SubCell"/>
</dbReference>
<dbReference type="GO" id="GO:0005524">
    <property type="term" value="F:ATP binding"/>
    <property type="evidence" value="ECO:0007669"/>
    <property type="project" value="InterPro"/>
</dbReference>
<dbReference type="GO" id="GO:0031072">
    <property type="term" value="F:heat shock protein binding"/>
    <property type="evidence" value="ECO:0007669"/>
    <property type="project" value="InterPro"/>
</dbReference>
<dbReference type="GO" id="GO:0051082">
    <property type="term" value="F:unfolded protein binding"/>
    <property type="evidence" value="ECO:0007669"/>
    <property type="project" value="UniProtKB-UniRule"/>
</dbReference>
<dbReference type="GO" id="GO:0008270">
    <property type="term" value="F:zinc ion binding"/>
    <property type="evidence" value="ECO:0007669"/>
    <property type="project" value="UniProtKB-UniRule"/>
</dbReference>
<dbReference type="GO" id="GO:0051085">
    <property type="term" value="P:chaperone cofactor-dependent protein refolding"/>
    <property type="evidence" value="ECO:0007669"/>
    <property type="project" value="TreeGrafter"/>
</dbReference>
<dbReference type="GO" id="GO:0006260">
    <property type="term" value="P:DNA replication"/>
    <property type="evidence" value="ECO:0007669"/>
    <property type="project" value="UniProtKB-KW"/>
</dbReference>
<dbReference type="GO" id="GO:0042026">
    <property type="term" value="P:protein refolding"/>
    <property type="evidence" value="ECO:0007669"/>
    <property type="project" value="TreeGrafter"/>
</dbReference>
<dbReference type="GO" id="GO:0009408">
    <property type="term" value="P:response to heat"/>
    <property type="evidence" value="ECO:0007669"/>
    <property type="project" value="InterPro"/>
</dbReference>
<dbReference type="CDD" id="cd06257">
    <property type="entry name" value="DnaJ"/>
    <property type="match status" value="1"/>
</dbReference>
<dbReference type="CDD" id="cd10747">
    <property type="entry name" value="DnaJ_C"/>
    <property type="match status" value="1"/>
</dbReference>
<dbReference type="CDD" id="cd10719">
    <property type="entry name" value="DnaJ_zf"/>
    <property type="match status" value="1"/>
</dbReference>
<dbReference type="FunFam" id="1.10.287.110:FF:000003">
    <property type="entry name" value="Molecular chaperone DnaJ"/>
    <property type="match status" value="1"/>
</dbReference>
<dbReference type="FunFam" id="2.10.230.10:FF:000002">
    <property type="entry name" value="Molecular chaperone DnaJ"/>
    <property type="match status" value="1"/>
</dbReference>
<dbReference type="FunFam" id="2.60.260.20:FF:000004">
    <property type="entry name" value="Molecular chaperone DnaJ"/>
    <property type="match status" value="1"/>
</dbReference>
<dbReference type="Gene3D" id="1.10.287.110">
    <property type="entry name" value="DnaJ domain"/>
    <property type="match status" value="1"/>
</dbReference>
<dbReference type="Gene3D" id="2.10.230.10">
    <property type="entry name" value="Heat shock protein DnaJ, cysteine-rich domain"/>
    <property type="match status" value="1"/>
</dbReference>
<dbReference type="Gene3D" id="2.60.260.20">
    <property type="entry name" value="Urease metallochaperone UreE, N-terminal domain"/>
    <property type="match status" value="2"/>
</dbReference>
<dbReference type="HAMAP" id="MF_01152">
    <property type="entry name" value="DnaJ"/>
    <property type="match status" value="1"/>
</dbReference>
<dbReference type="InterPro" id="IPR012724">
    <property type="entry name" value="DnaJ"/>
</dbReference>
<dbReference type="InterPro" id="IPR002939">
    <property type="entry name" value="DnaJ_C"/>
</dbReference>
<dbReference type="InterPro" id="IPR001623">
    <property type="entry name" value="DnaJ_domain"/>
</dbReference>
<dbReference type="InterPro" id="IPR018253">
    <property type="entry name" value="DnaJ_domain_CS"/>
</dbReference>
<dbReference type="InterPro" id="IPR008971">
    <property type="entry name" value="HSP40/DnaJ_pept-bd"/>
</dbReference>
<dbReference type="InterPro" id="IPR001305">
    <property type="entry name" value="HSP_DnaJ_Cys-rich_dom"/>
</dbReference>
<dbReference type="InterPro" id="IPR036410">
    <property type="entry name" value="HSP_DnaJ_Cys-rich_dom_sf"/>
</dbReference>
<dbReference type="InterPro" id="IPR036869">
    <property type="entry name" value="J_dom_sf"/>
</dbReference>
<dbReference type="NCBIfam" id="TIGR02349">
    <property type="entry name" value="DnaJ_bact"/>
    <property type="match status" value="1"/>
</dbReference>
<dbReference type="NCBIfam" id="NF008035">
    <property type="entry name" value="PRK10767.1"/>
    <property type="match status" value="1"/>
</dbReference>
<dbReference type="PANTHER" id="PTHR43096:SF48">
    <property type="entry name" value="CHAPERONE PROTEIN DNAJ"/>
    <property type="match status" value="1"/>
</dbReference>
<dbReference type="PANTHER" id="PTHR43096">
    <property type="entry name" value="DNAJ HOMOLOG 1, MITOCHONDRIAL-RELATED"/>
    <property type="match status" value="1"/>
</dbReference>
<dbReference type="Pfam" id="PF00226">
    <property type="entry name" value="DnaJ"/>
    <property type="match status" value="1"/>
</dbReference>
<dbReference type="Pfam" id="PF01556">
    <property type="entry name" value="DnaJ_C"/>
    <property type="match status" value="1"/>
</dbReference>
<dbReference type="Pfam" id="PF00684">
    <property type="entry name" value="DnaJ_CXXCXGXG"/>
    <property type="match status" value="1"/>
</dbReference>
<dbReference type="PRINTS" id="PR00625">
    <property type="entry name" value="JDOMAIN"/>
</dbReference>
<dbReference type="SMART" id="SM00271">
    <property type="entry name" value="DnaJ"/>
    <property type="match status" value="1"/>
</dbReference>
<dbReference type="SUPFAM" id="SSF46565">
    <property type="entry name" value="Chaperone J-domain"/>
    <property type="match status" value="1"/>
</dbReference>
<dbReference type="SUPFAM" id="SSF57938">
    <property type="entry name" value="DnaJ/Hsp40 cysteine-rich domain"/>
    <property type="match status" value="1"/>
</dbReference>
<dbReference type="SUPFAM" id="SSF49493">
    <property type="entry name" value="HSP40/DnaJ peptide-binding domain"/>
    <property type="match status" value="2"/>
</dbReference>
<dbReference type="PROSITE" id="PS00636">
    <property type="entry name" value="DNAJ_1"/>
    <property type="match status" value="1"/>
</dbReference>
<dbReference type="PROSITE" id="PS50076">
    <property type="entry name" value="DNAJ_2"/>
    <property type="match status" value="1"/>
</dbReference>
<dbReference type="PROSITE" id="PS51188">
    <property type="entry name" value="ZF_CR"/>
    <property type="match status" value="1"/>
</dbReference>
<reference key="1">
    <citation type="journal article" date="2009" name="PLoS Genet.">
        <title>Organised genome dynamics in the Escherichia coli species results in highly diverse adaptive paths.</title>
        <authorList>
            <person name="Touchon M."/>
            <person name="Hoede C."/>
            <person name="Tenaillon O."/>
            <person name="Barbe V."/>
            <person name="Baeriswyl S."/>
            <person name="Bidet P."/>
            <person name="Bingen E."/>
            <person name="Bonacorsi S."/>
            <person name="Bouchier C."/>
            <person name="Bouvet O."/>
            <person name="Calteau A."/>
            <person name="Chiapello H."/>
            <person name="Clermont O."/>
            <person name="Cruveiller S."/>
            <person name="Danchin A."/>
            <person name="Diard M."/>
            <person name="Dossat C."/>
            <person name="Karoui M.E."/>
            <person name="Frapy E."/>
            <person name="Garry L."/>
            <person name="Ghigo J.M."/>
            <person name="Gilles A.M."/>
            <person name="Johnson J."/>
            <person name="Le Bouguenec C."/>
            <person name="Lescat M."/>
            <person name="Mangenot S."/>
            <person name="Martinez-Jehanne V."/>
            <person name="Matic I."/>
            <person name="Nassif X."/>
            <person name="Oztas S."/>
            <person name="Petit M.A."/>
            <person name="Pichon C."/>
            <person name="Rouy Z."/>
            <person name="Ruf C.S."/>
            <person name="Schneider D."/>
            <person name="Tourret J."/>
            <person name="Vacherie B."/>
            <person name="Vallenet D."/>
            <person name="Medigue C."/>
            <person name="Rocha E.P.C."/>
            <person name="Denamur E."/>
        </authorList>
    </citation>
    <scope>NUCLEOTIDE SEQUENCE [LARGE SCALE GENOMIC DNA]</scope>
    <source>
        <strain>S88 / ExPEC</strain>
    </source>
</reference>
<sequence>MAKQDYYEILGVSKTAEEREIKKAYKRLAMKYHPDRNQGDKEAEAKFKEIKEAYEVLTDSQKRAAYDQYGHAAFEQGGMGGGGFGGGADFSDIFGDVFGDIFGGGRGRQRAARGADLRYNMELTLEEAVRGVTKEIRIPTLEECDVCHGSGAKPGTQPQTCPTCHGSGQVQMRQGFFAVQQTCPHCQGRGTLIKDPCNKCHGHGRVERSKTLSVKIPAGVDTGDRIRLAGEGEAGEHGAPAGDLYVQVQVKQHPIFEREGNNLYCEVPINFAMAALGGEIEVPTLDGRVKLKVPGETQTGKLFRMRGKGVKSVRGGAQGDLLCRVVVETPVGLNEKQKQLLQELQESFGGPTGEHNSPRSKSFFDGVKKFFDDLTR</sequence>
<proteinExistence type="inferred from homology"/>